<gene>
    <name type="primary">ydaT</name>
    <name type="ordered locus">BSU04380</name>
</gene>
<feature type="chain" id="PRO_0000375813" description="Uncharacterized protein YdaT">
    <location>
        <begin position="1"/>
        <end position="150"/>
    </location>
</feature>
<feature type="region of interest" description="Disordered" evidence="1">
    <location>
        <begin position="49"/>
        <end position="88"/>
    </location>
</feature>
<feature type="compositionally biased region" description="Basic and acidic residues" evidence="1">
    <location>
        <begin position="63"/>
        <end position="75"/>
    </location>
</feature>
<accession>P96595</accession>
<accession>A7XMW7</accession>
<accession>Q797L9</accession>
<dbReference type="EMBL" id="AB001488">
    <property type="protein sequence ID" value="BAA19275.1"/>
    <property type="molecule type" value="Genomic_DNA"/>
</dbReference>
<dbReference type="EMBL" id="AL009126">
    <property type="protein sequence ID" value="CAB12245.1"/>
    <property type="molecule type" value="Genomic_DNA"/>
</dbReference>
<dbReference type="EMBL" id="EU084745">
    <property type="protein sequence ID" value="ABU88890.1"/>
    <property type="molecule type" value="Genomic_DNA"/>
</dbReference>
<dbReference type="PIR" id="C69770">
    <property type="entry name" value="C69770"/>
</dbReference>
<dbReference type="RefSeq" id="NP_388319.1">
    <property type="nucleotide sequence ID" value="NC_000964.3"/>
</dbReference>
<dbReference type="RefSeq" id="WP_003246574.1">
    <property type="nucleotide sequence ID" value="NZ_OZ025638.1"/>
</dbReference>
<dbReference type="SMR" id="P96595"/>
<dbReference type="FunCoup" id="P96595">
    <property type="interactions" value="56"/>
</dbReference>
<dbReference type="STRING" id="224308.BSU04380"/>
<dbReference type="PaxDb" id="224308-BSU04380"/>
<dbReference type="EnsemblBacteria" id="CAB12245">
    <property type="protein sequence ID" value="CAB12245"/>
    <property type="gene ID" value="BSU_04380"/>
</dbReference>
<dbReference type="GeneID" id="939950"/>
<dbReference type="KEGG" id="bsu:BSU04380"/>
<dbReference type="PATRIC" id="fig|224308.179.peg.464"/>
<dbReference type="eggNOG" id="COG4876">
    <property type="taxonomic scope" value="Bacteria"/>
</dbReference>
<dbReference type="InParanoid" id="P96595"/>
<dbReference type="OrthoDB" id="8858565at2"/>
<dbReference type="BioCyc" id="BSUB:BSU04380-MONOMER"/>
<dbReference type="Proteomes" id="UP000001570">
    <property type="component" value="Chromosome"/>
</dbReference>
<dbReference type="InterPro" id="IPR018691">
    <property type="entry name" value="DUF2188"/>
</dbReference>
<dbReference type="Pfam" id="PF09954">
    <property type="entry name" value="DUF2188"/>
    <property type="match status" value="1"/>
</dbReference>
<protein>
    <recommendedName>
        <fullName>Uncharacterized protein YdaT</fullName>
    </recommendedName>
</protein>
<keyword id="KW-1185">Reference proteome</keyword>
<evidence type="ECO:0000256" key="1">
    <source>
        <dbReference type="SAM" id="MobiDB-lite"/>
    </source>
</evidence>
<name>YDAT_BACSU</name>
<organism>
    <name type="scientific">Bacillus subtilis (strain 168)</name>
    <dbReference type="NCBI Taxonomy" id="224308"/>
    <lineage>
        <taxon>Bacteria</taxon>
        <taxon>Bacillati</taxon>
        <taxon>Bacillota</taxon>
        <taxon>Bacilli</taxon>
        <taxon>Bacillales</taxon>
        <taxon>Bacillaceae</taxon>
        <taxon>Bacillus</taxon>
    </lineage>
</organism>
<sequence length="150" mass="16565">MPWSMKDYPASLKNLEKPVRKKAIDIANAMIDEGYEEGRAIPIATSKAKEWAENASTDEIDDFLTHDDETERDADPSSGSGPELMNKAEHVIKHKKGWAVKAEGAKRVSEIKDTKKEAIERAKEIAAHKGTEVIVHLADGSVQRKIKTGS</sequence>
<reference key="1">
    <citation type="submission" date="1997-03" db="EMBL/GenBank/DDBJ databases">
        <title>A 148 kbp sequence of the region between 35 and 47 degree of the Bacillus subtilis genome.</title>
        <authorList>
            <person name="Kasahara Y."/>
            <person name="Nakai S."/>
            <person name="Lee S."/>
            <person name="Sadaie Y."/>
            <person name="Ogasawara N."/>
        </authorList>
    </citation>
    <scope>NUCLEOTIDE SEQUENCE [GENOMIC DNA]</scope>
    <source>
        <strain>168</strain>
    </source>
</reference>
<reference key="2">
    <citation type="journal article" date="1997" name="Nature">
        <title>The complete genome sequence of the Gram-positive bacterium Bacillus subtilis.</title>
        <authorList>
            <person name="Kunst F."/>
            <person name="Ogasawara N."/>
            <person name="Moszer I."/>
            <person name="Albertini A.M."/>
            <person name="Alloni G."/>
            <person name="Azevedo V."/>
            <person name="Bertero M.G."/>
            <person name="Bessieres P."/>
            <person name="Bolotin A."/>
            <person name="Borchert S."/>
            <person name="Borriss R."/>
            <person name="Boursier L."/>
            <person name="Brans A."/>
            <person name="Braun M."/>
            <person name="Brignell S.C."/>
            <person name="Bron S."/>
            <person name="Brouillet S."/>
            <person name="Bruschi C.V."/>
            <person name="Caldwell B."/>
            <person name="Capuano V."/>
            <person name="Carter N.M."/>
            <person name="Choi S.-K."/>
            <person name="Codani J.-J."/>
            <person name="Connerton I.F."/>
            <person name="Cummings N.J."/>
            <person name="Daniel R.A."/>
            <person name="Denizot F."/>
            <person name="Devine K.M."/>
            <person name="Duesterhoeft A."/>
            <person name="Ehrlich S.D."/>
            <person name="Emmerson P.T."/>
            <person name="Entian K.-D."/>
            <person name="Errington J."/>
            <person name="Fabret C."/>
            <person name="Ferrari E."/>
            <person name="Foulger D."/>
            <person name="Fritz C."/>
            <person name="Fujita M."/>
            <person name="Fujita Y."/>
            <person name="Fuma S."/>
            <person name="Galizzi A."/>
            <person name="Galleron N."/>
            <person name="Ghim S.-Y."/>
            <person name="Glaser P."/>
            <person name="Goffeau A."/>
            <person name="Golightly E.J."/>
            <person name="Grandi G."/>
            <person name="Guiseppi G."/>
            <person name="Guy B.J."/>
            <person name="Haga K."/>
            <person name="Haiech J."/>
            <person name="Harwood C.R."/>
            <person name="Henaut A."/>
            <person name="Hilbert H."/>
            <person name="Holsappel S."/>
            <person name="Hosono S."/>
            <person name="Hullo M.-F."/>
            <person name="Itaya M."/>
            <person name="Jones L.-M."/>
            <person name="Joris B."/>
            <person name="Karamata D."/>
            <person name="Kasahara Y."/>
            <person name="Klaerr-Blanchard M."/>
            <person name="Klein C."/>
            <person name="Kobayashi Y."/>
            <person name="Koetter P."/>
            <person name="Koningstein G."/>
            <person name="Krogh S."/>
            <person name="Kumano M."/>
            <person name="Kurita K."/>
            <person name="Lapidus A."/>
            <person name="Lardinois S."/>
            <person name="Lauber J."/>
            <person name="Lazarevic V."/>
            <person name="Lee S.-M."/>
            <person name="Levine A."/>
            <person name="Liu H."/>
            <person name="Masuda S."/>
            <person name="Mauel C."/>
            <person name="Medigue C."/>
            <person name="Medina N."/>
            <person name="Mellado R.P."/>
            <person name="Mizuno M."/>
            <person name="Moestl D."/>
            <person name="Nakai S."/>
            <person name="Noback M."/>
            <person name="Noone D."/>
            <person name="O'Reilly M."/>
            <person name="Ogawa K."/>
            <person name="Ogiwara A."/>
            <person name="Oudega B."/>
            <person name="Park S.-H."/>
            <person name="Parro V."/>
            <person name="Pohl T.M."/>
            <person name="Portetelle D."/>
            <person name="Porwollik S."/>
            <person name="Prescott A.M."/>
            <person name="Presecan E."/>
            <person name="Pujic P."/>
            <person name="Purnelle B."/>
            <person name="Rapoport G."/>
            <person name="Rey M."/>
            <person name="Reynolds S."/>
            <person name="Rieger M."/>
            <person name="Rivolta C."/>
            <person name="Rocha E."/>
            <person name="Roche B."/>
            <person name="Rose M."/>
            <person name="Sadaie Y."/>
            <person name="Sato T."/>
            <person name="Scanlan E."/>
            <person name="Schleich S."/>
            <person name="Schroeter R."/>
            <person name="Scoffone F."/>
            <person name="Sekiguchi J."/>
            <person name="Sekowska A."/>
            <person name="Seror S.J."/>
            <person name="Serror P."/>
            <person name="Shin B.-S."/>
            <person name="Soldo B."/>
            <person name="Sorokin A."/>
            <person name="Tacconi E."/>
            <person name="Takagi T."/>
            <person name="Takahashi H."/>
            <person name="Takemaru K."/>
            <person name="Takeuchi M."/>
            <person name="Tamakoshi A."/>
            <person name="Tanaka T."/>
            <person name="Terpstra P."/>
            <person name="Tognoni A."/>
            <person name="Tosato V."/>
            <person name="Uchiyama S."/>
            <person name="Vandenbol M."/>
            <person name="Vannier F."/>
            <person name="Vassarotti A."/>
            <person name="Viari A."/>
            <person name="Wambutt R."/>
            <person name="Wedler E."/>
            <person name="Wedler H."/>
            <person name="Weitzenegger T."/>
            <person name="Winters P."/>
            <person name="Wipat A."/>
            <person name="Yamamoto H."/>
            <person name="Yamane K."/>
            <person name="Yasumoto K."/>
            <person name="Yata K."/>
            <person name="Yoshida K."/>
            <person name="Yoshikawa H.-F."/>
            <person name="Zumstein E."/>
            <person name="Yoshikawa H."/>
            <person name="Danchin A."/>
        </authorList>
    </citation>
    <scope>NUCLEOTIDE SEQUENCE [LARGE SCALE GENOMIC DNA]</scope>
    <source>
        <strain>168</strain>
    </source>
</reference>
<reference key="3">
    <citation type="journal article" date="2008" name="J. Bacteriol.">
        <title>The origins of 168, W23, and other Bacillus subtilis legacy strains.</title>
        <authorList>
            <person name="Zeigler D.R."/>
            <person name="Pragai Z."/>
            <person name="Rodriguez S."/>
            <person name="Chevreux B."/>
            <person name="Muffler A."/>
            <person name="Albert T."/>
            <person name="Bai R."/>
            <person name="Wyss M."/>
            <person name="Perkins J.B."/>
        </authorList>
    </citation>
    <scope>NUCLEOTIDE SEQUENCE [GENOMIC DNA] OF 30-150</scope>
    <source>
        <strain>168 / PY79</strain>
    </source>
</reference>
<proteinExistence type="predicted"/>